<evidence type="ECO:0000250" key="1"/>
<evidence type="ECO:0000255" key="2">
    <source>
        <dbReference type="HAMAP-Rule" id="MF_00100"/>
    </source>
</evidence>
<evidence type="ECO:0000256" key="3">
    <source>
        <dbReference type="SAM" id="MobiDB-lite"/>
    </source>
</evidence>
<keyword id="KW-0963">Cytoplasm</keyword>
<keyword id="KW-0342">GTP-binding</keyword>
<keyword id="KW-0396">Initiation factor</keyword>
<keyword id="KW-0547">Nucleotide-binding</keyword>
<keyword id="KW-0648">Protein biosynthesis</keyword>
<name>IF2_CHLTA</name>
<feature type="chain" id="PRO_0000228182" description="Translation initiation factor IF-2">
    <location>
        <begin position="1"/>
        <end position="892"/>
    </location>
</feature>
<feature type="domain" description="tr-type G">
    <location>
        <begin position="397"/>
        <end position="566"/>
    </location>
</feature>
<feature type="region of interest" description="Disordered" evidence="3">
    <location>
        <begin position="32"/>
        <end position="102"/>
    </location>
</feature>
<feature type="region of interest" description="Disordered" evidence="3">
    <location>
        <begin position="114"/>
        <end position="300"/>
    </location>
</feature>
<feature type="region of interest" description="G1" evidence="1">
    <location>
        <begin position="406"/>
        <end position="413"/>
    </location>
</feature>
<feature type="region of interest" description="G2" evidence="1">
    <location>
        <begin position="431"/>
        <end position="435"/>
    </location>
</feature>
<feature type="region of interest" description="G3" evidence="1">
    <location>
        <begin position="452"/>
        <end position="455"/>
    </location>
</feature>
<feature type="region of interest" description="G4" evidence="1">
    <location>
        <begin position="506"/>
        <end position="509"/>
    </location>
</feature>
<feature type="region of interest" description="G5" evidence="1">
    <location>
        <begin position="542"/>
        <end position="544"/>
    </location>
</feature>
<feature type="compositionally biased region" description="Polar residues" evidence="3">
    <location>
        <begin position="35"/>
        <end position="48"/>
    </location>
</feature>
<feature type="compositionally biased region" description="Basic and acidic residues" evidence="3">
    <location>
        <begin position="139"/>
        <end position="166"/>
    </location>
</feature>
<feature type="compositionally biased region" description="Low complexity" evidence="3">
    <location>
        <begin position="200"/>
        <end position="211"/>
    </location>
</feature>
<feature type="compositionally biased region" description="Polar residues" evidence="3">
    <location>
        <begin position="212"/>
        <end position="224"/>
    </location>
</feature>
<feature type="compositionally biased region" description="Low complexity" evidence="3">
    <location>
        <begin position="225"/>
        <end position="238"/>
    </location>
</feature>
<feature type="compositionally biased region" description="Basic and acidic residues" evidence="3">
    <location>
        <begin position="252"/>
        <end position="276"/>
    </location>
</feature>
<feature type="binding site" evidence="2">
    <location>
        <begin position="406"/>
        <end position="413"/>
    </location>
    <ligand>
        <name>GTP</name>
        <dbReference type="ChEBI" id="CHEBI:37565"/>
    </ligand>
</feature>
<feature type="binding site" evidence="2">
    <location>
        <begin position="452"/>
        <end position="456"/>
    </location>
    <ligand>
        <name>GTP</name>
        <dbReference type="ChEBI" id="CHEBI:37565"/>
    </ligand>
</feature>
<feature type="binding site" evidence="2">
    <location>
        <begin position="506"/>
        <end position="509"/>
    </location>
    <ligand>
        <name>GTP</name>
        <dbReference type="ChEBI" id="CHEBI:37565"/>
    </ligand>
</feature>
<organism>
    <name type="scientific">Chlamydia trachomatis serovar A (strain ATCC VR-571B / DSM 19440 / HAR-13)</name>
    <dbReference type="NCBI Taxonomy" id="315277"/>
    <lineage>
        <taxon>Bacteria</taxon>
        <taxon>Pseudomonadati</taxon>
        <taxon>Chlamydiota</taxon>
        <taxon>Chlamydiia</taxon>
        <taxon>Chlamydiales</taxon>
        <taxon>Chlamydiaceae</taxon>
        <taxon>Chlamydia/Chlamydophila group</taxon>
        <taxon>Chlamydia</taxon>
    </lineage>
</organism>
<comment type="function">
    <text evidence="2">One of the essential components for the initiation of protein synthesis. Protects formylmethionyl-tRNA from spontaneous hydrolysis and promotes its binding to the 30S ribosomal subunits. Also involved in the hydrolysis of GTP during the formation of the 70S ribosomal complex.</text>
</comment>
<comment type="subcellular location">
    <subcellularLocation>
        <location evidence="2">Cytoplasm</location>
    </subcellularLocation>
</comment>
<comment type="similarity">
    <text evidence="2">Belongs to the TRAFAC class translation factor GTPase superfamily. Classic translation factor GTPase family. IF-2 subfamily.</text>
</comment>
<reference key="1">
    <citation type="journal article" date="2005" name="Infect. Immun.">
        <title>Comparative genomic analysis of Chlamydia trachomatis oculotropic and genitotropic strains.</title>
        <authorList>
            <person name="Carlson J.H."/>
            <person name="Porcella S.F."/>
            <person name="McClarty G."/>
            <person name="Caldwell H.D."/>
        </authorList>
    </citation>
    <scope>NUCLEOTIDE SEQUENCE [LARGE SCALE GENOMIC DNA]</scope>
    <source>
        <strain>ATCC VR-571B / DSM 19440 / HAR-13</strain>
    </source>
</reference>
<gene>
    <name evidence="2" type="primary">infB</name>
    <name type="ordered locus">CTA_0102</name>
</gene>
<dbReference type="EMBL" id="CP000051">
    <property type="protein sequence ID" value="AAX50348.1"/>
    <property type="molecule type" value="Genomic_DNA"/>
</dbReference>
<dbReference type="RefSeq" id="WP_009871444.1">
    <property type="nucleotide sequence ID" value="NC_007429.1"/>
</dbReference>
<dbReference type="SMR" id="Q3KMS4"/>
<dbReference type="KEGG" id="cta:CTA_0102"/>
<dbReference type="HOGENOM" id="CLU_006301_3_1_0"/>
<dbReference type="Proteomes" id="UP000002532">
    <property type="component" value="Chromosome"/>
</dbReference>
<dbReference type="GO" id="GO:0005829">
    <property type="term" value="C:cytosol"/>
    <property type="evidence" value="ECO:0007669"/>
    <property type="project" value="TreeGrafter"/>
</dbReference>
<dbReference type="GO" id="GO:0005525">
    <property type="term" value="F:GTP binding"/>
    <property type="evidence" value="ECO:0007669"/>
    <property type="project" value="UniProtKB-KW"/>
</dbReference>
<dbReference type="GO" id="GO:0003924">
    <property type="term" value="F:GTPase activity"/>
    <property type="evidence" value="ECO:0007669"/>
    <property type="project" value="UniProtKB-UniRule"/>
</dbReference>
<dbReference type="GO" id="GO:0003743">
    <property type="term" value="F:translation initiation factor activity"/>
    <property type="evidence" value="ECO:0007669"/>
    <property type="project" value="UniProtKB-UniRule"/>
</dbReference>
<dbReference type="CDD" id="cd01887">
    <property type="entry name" value="IF2_eIF5B"/>
    <property type="match status" value="1"/>
</dbReference>
<dbReference type="CDD" id="cd03702">
    <property type="entry name" value="IF2_mtIF2_II"/>
    <property type="match status" value="1"/>
</dbReference>
<dbReference type="CDD" id="cd03692">
    <property type="entry name" value="mtIF2_IVc"/>
    <property type="match status" value="1"/>
</dbReference>
<dbReference type="FunFam" id="2.40.30.10:FF:000008">
    <property type="entry name" value="Translation initiation factor IF-2"/>
    <property type="match status" value="1"/>
</dbReference>
<dbReference type="FunFam" id="2.40.30.10:FF:000054">
    <property type="entry name" value="Translation initiation factor IF-2"/>
    <property type="match status" value="1"/>
</dbReference>
<dbReference type="FunFam" id="3.40.50.10050:FF:000001">
    <property type="entry name" value="Translation initiation factor IF-2"/>
    <property type="match status" value="1"/>
</dbReference>
<dbReference type="FunFam" id="3.40.50.300:FF:000019">
    <property type="entry name" value="Translation initiation factor IF-2"/>
    <property type="match status" value="1"/>
</dbReference>
<dbReference type="Gene3D" id="3.40.50.300">
    <property type="entry name" value="P-loop containing nucleotide triphosphate hydrolases"/>
    <property type="match status" value="1"/>
</dbReference>
<dbReference type="Gene3D" id="2.40.30.10">
    <property type="entry name" value="Translation factors"/>
    <property type="match status" value="2"/>
</dbReference>
<dbReference type="Gene3D" id="3.40.50.10050">
    <property type="entry name" value="Translation initiation factor IF- 2, domain 3"/>
    <property type="match status" value="1"/>
</dbReference>
<dbReference type="HAMAP" id="MF_00100_B">
    <property type="entry name" value="IF_2_B"/>
    <property type="match status" value="1"/>
</dbReference>
<dbReference type="InterPro" id="IPR053905">
    <property type="entry name" value="EF-G-like_DII"/>
</dbReference>
<dbReference type="InterPro" id="IPR004161">
    <property type="entry name" value="EFTu-like_2"/>
</dbReference>
<dbReference type="InterPro" id="IPR044145">
    <property type="entry name" value="IF2_II"/>
</dbReference>
<dbReference type="InterPro" id="IPR006847">
    <property type="entry name" value="IF2_N"/>
</dbReference>
<dbReference type="InterPro" id="IPR027417">
    <property type="entry name" value="P-loop_NTPase"/>
</dbReference>
<dbReference type="InterPro" id="IPR005225">
    <property type="entry name" value="Small_GTP-bd"/>
</dbReference>
<dbReference type="InterPro" id="IPR000795">
    <property type="entry name" value="T_Tr_GTP-bd_dom"/>
</dbReference>
<dbReference type="InterPro" id="IPR000178">
    <property type="entry name" value="TF_IF2_bacterial-like"/>
</dbReference>
<dbReference type="InterPro" id="IPR015760">
    <property type="entry name" value="TIF_IF2"/>
</dbReference>
<dbReference type="InterPro" id="IPR023115">
    <property type="entry name" value="TIF_IF2_dom3"/>
</dbReference>
<dbReference type="InterPro" id="IPR036925">
    <property type="entry name" value="TIF_IF2_dom3_sf"/>
</dbReference>
<dbReference type="InterPro" id="IPR009000">
    <property type="entry name" value="Transl_B-barrel_sf"/>
</dbReference>
<dbReference type="NCBIfam" id="TIGR00487">
    <property type="entry name" value="IF-2"/>
    <property type="match status" value="1"/>
</dbReference>
<dbReference type="NCBIfam" id="TIGR00231">
    <property type="entry name" value="small_GTP"/>
    <property type="match status" value="1"/>
</dbReference>
<dbReference type="PANTHER" id="PTHR43381:SF5">
    <property type="entry name" value="TR-TYPE G DOMAIN-CONTAINING PROTEIN"/>
    <property type="match status" value="1"/>
</dbReference>
<dbReference type="PANTHER" id="PTHR43381">
    <property type="entry name" value="TRANSLATION INITIATION FACTOR IF-2-RELATED"/>
    <property type="match status" value="1"/>
</dbReference>
<dbReference type="Pfam" id="PF22042">
    <property type="entry name" value="EF-G_D2"/>
    <property type="match status" value="1"/>
</dbReference>
<dbReference type="Pfam" id="PF00009">
    <property type="entry name" value="GTP_EFTU"/>
    <property type="match status" value="1"/>
</dbReference>
<dbReference type="Pfam" id="PF03144">
    <property type="entry name" value="GTP_EFTU_D2"/>
    <property type="match status" value="1"/>
</dbReference>
<dbReference type="Pfam" id="PF11987">
    <property type="entry name" value="IF-2"/>
    <property type="match status" value="1"/>
</dbReference>
<dbReference type="Pfam" id="PF04760">
    <property type="entry name" value="IF2_N"/>
    <property type="match status" value="1"/>
</dbReference>
<dbReference type="SUPFAM" id="SSF52156">
    <property type="entry name" value="Initiation factor IF2/eIF5b, domain 3"/>
    <property type="match status" value="1"/>
</dbReference>
<dbReference type="SUPFAM" id="SSF52540">
    <property type="entry name" value="P-loop containing nucleoside triphosphate hydrolases"/>
    <property type="match status" value="1"/>
</dbReference>
<dbReference type="SUPFAM" id="SSF50447">
    <property type="entry name" value="Translation proteins"/>
    <property type="match status" value="2"/>
</dbReference>
<dbReference type="PROSITE" id="PS51722">
    <property type="entry name" value="G_TR_2"/>
    <property type="match status" value="1"/>
</dbReference>
<dbReference type="PROSITE" id="PS01176">
    <property type="entry name" value="IF2"/>
    <property type="match status" value="1"/>
</dbReference>
<proteinExistence type="inferred from homology"/>
<accession>Q3KMS4</accession>
<sequence>MEKVKLTKNLKLKIKNAQLTKAAGLDKLKQKLAQAGSSDTKNSPASKAQTKEKSSKKTAGTPAPAPEVDSGATESTARRIRAKDRSSFAAEPTVTTALPGDASHLTLDAIPAMKAPEITSVTQKEQTLGECTDTSSVQQEEKKESSEETSPERVEETLIIRTRTEPKSVVSIKPKFGPTGKHINHLLAKTFKAPAKETKAASTEETTQQQPRQNDAASYNNKQQPSGTSSRPASSAPSYRRESTNNNNNAKRGSERDRSKRSDESVKAFTGRDRYGLNEGSSEEDKWRKKRVHKTKKQAEEHVVQCPAHIKIALPITVKDLAAEMKLKASELIQKLFIHGMTYVVNDVLDSQTVVEYIGLEFGCTIEIDSSAKEKLCLLENAVRDEVNATDPEKLIIRSPIVAFMGHVDHGKTTIIDALRQSNMAASEAGAITQHTGAFKCTTPVGEITVLDTPGHEAFSAMRARGAEVCDIVVLVVAGDEGIKEQTIEAIEHAKGANITIVVAINKCDKPNFNVETVYRQLAELDLLPEAWGGSIATINTSAKTGEGLQDLLEMLALQAEVLELKADPSARARGLVIESELHKGLGAVATVLVQNGTLHLGEALVFNDCYGKVKTMHDEHNQLLQSATPSTPVLITGLSAIPKAGDPFIVVKNEKVAKEIISARLAGQQRSAALQKKRPNFDAVLQNKKTLKLIIKADVQGSIEALAHSILNIRSEKVDVEILSSEVGDISESDIRLASASKATVIGFHTSVESHAEPLIKNLNVKVCLFDIIYHAVDAIKEIMTGLLDPIAEEKNLGAAEIKATFKSSQLGTIYGCLVTEGTIVRNQKIRIIRDKEVLWKGSLSSLKRLKEDVKEVKKGMECGILLDNYQQAQVGDILQCYEVIYHPQKL</sequence>
<protein>
    <recommendedName>
        <fullName evidence="2">Translation initiation factor IF-2</fullName>
    </recommendedName>
</protein>